<comment type="function">
    <text evidence="1">Plays an essential role in transcription initiation and cap-stealing mechanism, in which cellular capped pre-mRNAs are used to generate primers for viral transcription. Recognizes and binds the 7-methylguanosine-containing cap of the target pre-RNA which is subsequently cleaved after 10-13 nucleotides by the viral protein PA. Plays a role in the initiation of the viral genome replication and modulates the activity of the ribonucleoprotein (RNP) complex. In addition, participates in the inhibition of type I interferon induction through interaction with and inhibition of the host mitochondrial antiviral signaling protein MAVS.</text>
</comment>
<comment type="subunit">
    <text evidence="1">Influenza RNA polymerase is composed of three subunits: PB1, PB2 and PA. Interacts (via N-terminus) with PB1 (via C-terminus). Interacts with nucleoprotein NP (via N-terminus). Interacts (via N-terminus) with host MAVS (via N-terminus); this interaction inhibits host innate immune response.</text>
</comment>
<comment type="subcellular location">
    <subcellularLocation>
        <location evidence="1">Virion</location>
    </subcellularLocation>
    <subcellularLocation>
        <location evidence="1">Host nucleus</location>
    </subcellularLocation>
    <subcellularLocation>
        <location evidence="1">Host mitochondrion</location>
    </subcellularLocation>
</comment>
<comment type="similarity">
    <text evidence="1">Belongs to the influenza viruses PB2 family.</text>
</comment>
<proteinExistence type="inferred from homology"/>
<dbReference type="EMBL" id="M81581">
    <property type="protein sequence ID" value="AAA19214.2"/>
    <property type="molecule type" value="Genomic_RNA"/>
</dbReference>
<dbReference type="SMR" id="P26125"/>
<dbReference type="GO" id="GO:0033650">
    <property type="term" value="C:host cell mitochondrion"/>
    <property type="evidence" value="ECO:0007669"/>
    <property type="project" value="UniProtKB-SubCell"/>
</dbReference>
<dbReference type="GO" id="GO:0042025">
    <property type="term" value="C:host cell nucleus"/>
    <property type="evidence" value="ECO:0007669"/>
    <property type="project" value="UniProtKB-SubCell"/>
</dbReference>
<dbReference type="GO" id="GO:0044423">
    <property type="term" value="C:virion component"/>
    <property type="evidence" value="ECO:0007669"/>
    <property type="project" value="UniProtKB-UniRule"/>
</dbReference>
<dbReference type="GO" id="GO:0003723">
    <property type="term" value="F:RNA binding"/>
    <property type="evidence" value="ECO:0007669"/>
    <property type="project" value="UniProtKB-UniRule"/>
</dbReference>
<dbReference type="GO" id="GO:0003968">
    <property type="term" value="F:RNA-directed RNA polymerase activity"/>
    <property type="evidence" value="ECO:0007669"/>
    <property type="project" value="UniProtKB-UniRule"/>
</dbReference>
<dbReference type="GO" id="GO:0006370">
    <property type="term" value="P:7-methylguanosine mRNA capping"/>
    <property type="evidence" value="ECO:0007669"/>
    <property type="project" value="UniProtKB-UniRule"/>
</dbReference>
<dbReference type="GO" id="GO:0075526">
    <property type="term" value="P:cap snatching"/>
    <property type="evidence" value="ECO:0007669"/>
    <property type="project" value="UniProtKB-UniRule"/>
</dbReference>
<dbReference type="GO" id="GO:0006351">
    <property type="term" value="P:DNA-templated transcription"/>
    <property type="evidence" value="ECO:0007669"/>
    <property type="project" value="UniProtKB-UniRule"/>
</dbReference>
<dbReference type="GO" id="GO:0039545">
    <property type="term" value="P:symbiont-mediated suppression of host cytoplasmic pattern recognition receptor signaling pathway via inhibition of MAVS activity"/>
    <property type="evidence" value="ECO:0007669"/>
    <property type="project" value="UniProtKB-UniRule"/>
</dbReference>
<dbReference type="GO" id="GO:0039657">
    <property type="term" value="P:symbiont-mediated suppression of host gene expression"/>
    <property type="evidence" value="ECO:0007669"/>
    <property type="project" value="UniProtKB-KW"/>
</dbReference>
<dbReference type="GO" id="GO:0039523">
    <property type="term" value="P:symbiont-mediated suppression of host mRNA transcription via inhibition of RNA polymerase II activity"/>
    <property type="evidence" value="ECO:0007669"/>
    <property type="project" value="UniProtKB-UniRule"/>
</dbReference>
<dbReference type="GO" id="GO:0039694">
    <property type="term" value="P:viral RNA genome replication"/>
    <property type="evidence" value="ECO:0007669"/>
    <property type="project" value="InterPro"/>
</dbReference>
<dbReference type="FunFam" id="3.30.30.90:FF:000001">
    <property type="entry name" value="Polymerase basic protein 2"/>
    <property type="match status" value="1"/>
</dbReference>
<dbReference type="Gene3D" id="3.30.30.90">
    <property type="entry name" value="Polymerase Basic Protein 2, C-terminal domain"/>
    <property type="match status" value="1"/>
</dbReference>
<dbReference type="HAMAP" id="MF_04062">
    <property type="entry name" value="INV_PB2"/>
    <property type="match status" value="1"/>
</dbReference>
<dbReference type="InterPro" id="IPR049110">
    <property type="entry name" value="Flu_PB2_2nd"/>
</dbReference>
<dbReference type="InterPro" id="IPR049114">
    <property type="entry name" value="Flu_PB2_6th"/>
</dbReference>
<dbReference type="InterPro" id="IPR049115">
    <property type="entry name" value="Flu_PB2_C"/>
</dbReference>
<dbReference type="InterPro" id="IPR048298">
    <property type="entry name" value="Flu_PB2_CAP-bd"/>
</dbReference>
<dbReference type="InterPro" id="IPR049111">
    <property type="entry name" value="Flu_PB2_middle"/>
</dbReference>
<dbReference type="InterPro" id="IPR049106">
    <property type="entry name" value="Flu_PB2_N"/>
</dbReference>
<dbReference type="InterPro" id="IPR001591">
    <property type="entry name" value="INV_PB2"/>
</dbReference>
<dbReference type="InterPro" id="IPR049113">
    <property type="entry name" value="PB2_helical"/>
</dbReference>
<dbReference type="InterPro" id="IPR037258">
    <property type="entry name" value="PDB2_C"/>
</dbReference>
<dbReference type="Pfam" id="PF20947">
    <property type="entry name" value="Flu_PB2_1st"/>
    <property type="match status" value="1"/>
</dbReference>
<dbReference type="Pfam" id="PF20948">
    <property type="entry name" value="Flu_PB2_2nd"/>
    <property type="match status" value="1"/>
</dbReference>
<dbReference type="Pfam" id="PF20949">
    <property type="entry name" value="Flu_PB2_3rd"/>
    <property type="match status" value="1"/>
</dbReference>
<dbReference type="Pfam" id="PF20950">
    <property type="entry name" value="Flu_PB2_4th"/>
    <property type="match status" value="1"/>
</dbReference>
<dbReference type="Pfam" id="PF00604">
    <property type="entry name" value="Flu_PB2_5th"/>
    <property type="match status" value="1"/>
</dbReference>
<dbReference type="Pfam" id="PF20951">
    <property type="entry name" value="Flu_PB2_6th"/>
    <property type="match status" value="1"/>
</dbReference>
<dbReference type="Pfam" id="PF20952">
    <property type="entry name" value="Flu_PB2_7th"/>
    <property type="match status" value="1"/>
</dbReference>
<dbReference type="SUPFAM" id="SSF160453">
    <property type="entry name" value="PB2 C-terminal domain-like"/>
    <property type="match status" value="1"/>
</dbReference>
<protein>
    <recommendedName>
        <fullName evidence="1">Polymerase basic protein 2</fullName>
    </recommendedName>
    <alternativeName>
        <fullName evidence="1">RNA-directed RNA polymerase subunit P3</fullName>
    </alternativeName>
</protein>
<organism>
    <name type="scientific">Influenza A virus (strain A/Leningrad/134/17/1957 H2N2)</name>
    <dbReference type="NCBI Taxonomy" id="380984"/>
    <lineage>
        <taxon>Viruses</taxon>
        <taxon>Riboviria</taxon>
        <taxon>Orthornavirae</taxon>
        <taxon>Negarnaviricota</taxon>
        <taxon>Polyploviricotina</taxon>
        <taxon>Insthoviricetes</taxon>
        <taxon>Articulavirales</taxon>
        <taxon>Orthomyxoviridae</taxon>
        <taxon>Alphainfluenzavirus</taxon>
        <taxon>Alphainfluenzavirus influenzae</taxon>
        <taxon>Influenza A virus</taxon>
    </lineage>
</organism>
<feature type="chain" id="PRO_0000078829" description="Polymerase basic protein 2">
    <location>
        <begin position="1"/>
        <end position="759"/>
    </location>
</feature>
<feature type="short sequence motif" description="Nuclear localization signal" evidence="1">
    <location>
        <begin position="736"/>
        <end position="739"/>
    </location>
</feature>
<feature type="site" description="Mammalian adaptation" evidence="1">
    <location>
        <position position="627"/>
    </location>
</feature>
<reference key="1">
    <citation type="journal article" date="1992" name="Virology">
        <title>Sequence changes in the live attenuated, cold-adapted variants of influenza A/Leningrad/134/57 (H2N2) virus.</title>
        <authorList>
            <person name="Klimov A.I."/>
            <person name="Cox N.J."/>
            <person name="Yotov W.V."/>
            <person name="Rocha E."/>
            <person name="Alexandrova G.I."/>
            <person name="Kendal A.P."/>
        </authorList>
    </citation>
    <scope>NUCLEOTIDE SEQUENCE [GENOMIC RNA]</scope>
</reference>
<reference key="2">
    <citation type="submission" date="2000-06" db="EMBL/GenBank/DDBJ databases">
        <authorList>
            <person name="Klimov A.I."/>
        </authorList>
    </citation>
    <scope>SEQUENCE REVISION TO 608 AND 655</scope>
</reference>
<accession>P26125</accession>
<organismHost>
    <name type="scientific">Aves</name>
    <dbReference type="NCBI Taxonomy" id="8782"/>
</organismHost>
<organismHost>
    <name type="scientific">Homo sapiens</name>
    <name type="common">Human</name>
    <dbReference type="NCBI Taxonomy" id="9606"/>
</organismHost>
<keyword id="KW-1157">Cap snatching</keyword>
<keyword id="KW-1262">Eukaryotic host gene expression shutoff by virus</keyword>
<keyword id="KW-1191">Eukaryotic host transcription shutoff by virus</keyword>
<keyword id="KW-1190">Host gene expression shutoff by virus</keyword>
<keyword id="KW-1045">Host mitochondrion</keyword>
<keyword id="KW-1048">Host nucleus</keyword>
<keyword id="KW-0945">Host-virus interaction</keyword>
<keyword id="KW-1090">Inhibition of host innate immune response by virus</keyword>
<keyword id="KW-1097">Inhibition of host MAVS by virus</keyword>
<keyword id="KW-1113">Inhibition of host RLR pathway by virus</keyword>
<keyword id="KW-1104">Inhibition of host RNA polymerase II by virus</keyword>
<keyword id="KW-0506">mRNA capping</keyword>
<keyword id="KW-0507">mRNA processing</keyword>
<keyword id="KW-0899">Viral immunoevasion</keyword>
<keyword id="KW-1195">Viral transcription</keyword>
<keyword id="KW-0946">Virion</keyword>
<gene>
    <name evidence="1" type="primary">PB2</name>
</gene>
<sequence>MERIKELRNLMSQSRTREILTKTTVDHMAIIKKYTSGRQEKNPSLRMKWMMAMKYPITADKRITEMIPERNEQGQTLWSKMSDAGSDRVMVSPLAVTWWNRNGPMTSTVHYPKIYKTYFEKVERLKHGTFGPVHFRNQVKIRRRVDINPGHADLSAKEAQDVIMEVVFPNEVGARILTSESQLTITKEKKEELQDCKISPLMVAYMLERELVRKTRFLPVAGGTSSVYIEVLHLTQGTCWEQMYTPGGEVRNDDVDQSLIIAARNIVRRAAVSADPLASLLEMCHSTQIGGTRMVDILRQNPTEEQAVDICKAAMGLRISSSFSFGGFTFKRTSGSSVKREEEVLTGNLQTLKIRVHEGYEEFTMVGKRATAILRKATRRLIQLIVSGRDEQSIAEAIIVAMVFSQEDCMIKAVRGDLNFVNRANQRLNPMHQLLRHFQKDAKVLFQNWGIEHIDNVMGMIGVLPDMTPSTEMSMRGLRVSKMGVDEYSSAERVVVSIDRFLRVRDQRGNVLLSPEEVSETQGTEKLTITYSSSMMWEINGPESVLVNTYQWIIRNWETVKIQWSQNPTMLYNKMEFEPFQSLVPKAIRGQYSGFVRTLFQQMRDVLGTFDTTQIIKLLPFAAAPPKQSRMQFSSLTVNVRGSGMRILVRGNSPVFNYNKTTKRLTILGKDAGTLTEDPDEGTSGVESAVLRGFLILGKEDRRYGPALSINELSNLAKGEKANVLIGQGDVVLVMKRKRDSSILTDSQTATKRIRMAIN</sequence>
<evidence type="ECO:0000255" key="1">
    <source>
        <dbReference type="HAMAP-Rule" id="MF_04062"/>
    </source>
</evidence>
<name>PB2_I57A2</name>